<gene>
    <name evidence="1" type="primary">ihfB</name>
    <name evidence="1" type="synonym">himD</name>
    <name type="ordered locus">Pfl01_4060</name>
</gene>
<name>IHFB_PSEPF</name>
<evidence type="ECO:0000255" key="1">
    <source>
        <dbReference type="HAMAP-Rule" id="MF_00381"/>
    </source>
</evidence>
<keyword id="KW-0233">DNA recombination</keyword>
<keyword id="KW-0238">DNA-binding</keyword>
<keyword id="KW-0804">Transcription</keyword>
<keyword id="KW-0805">Transcription regulation</keyword>
<keyword id="KW-0810">Translation regulation</keyword>
<dbReference type="EMBL" id="CP000094">
    <property type="protein sequence ID" value="ABA75797.1"/>
    <property type="molecule type" value="Genomic_DNA"/>
</dbReference>
<dbReference type="RefSeq" id="WP_011335356.1">
    <property type="nucleotide sequence ID" value="NC_007492.2"/>
</dbReference>
<dbReference type="SMR" id="Q3K8V7"/>
<dbReference type="KEGG" id="pfo:Pfl01_4060"/>
<dbReference type="eggNOG" id="COG0776">
    <property type="taxonomic scope" value="Bacteria"/>
</dbReference>
<dbReference type="HOGENOM" id="CLU_105066_2_0_6"/>
<dbReference type="Proteomes" id="UP000002704">
    <property type="component" value="Chromosome"/>
</dbReference>
<dbReference type="GO" id="GO:0005694">
    <property type="term" value="C:chromosome"/>
    <property type="evidence" value="ECO:0007669"/>
    <property type="project" value="InterPro"/>
</dbReference>
<dbReference type="GO" id="GO:0005829">
    <property type="term" value="C:cytosol"/>
    <property type="evidence" value="ECO:0007669"/>
    <property type="project" value="TreeGrafter"/>
</dbReference>
<dbReference type="GO" id="GO:0003677">
    <property type="term" value="F:DNA binding"/>
    <property type="evidence" value="ECO:0007669"/>
    <property type="project" value="UniProtKB-UniRule"/>
</dbReference>
<dbReference type="GO" id="GO:0030527">
    <property type="term" value="F:structural constituent of chromatin"/>
    <property type="evidence" value="ECO:0007669"/>
    <property type="project" value="InterPro"/>
</dbReference>
<dbReference type="GO" id="GO:0006310">
    <property type="term" value="P:DNA recombination"/>
    <property type="evidence" value="ECO:0007669"/>
    <property type="project" value="UniProtKB-UniRule"/>
</dbReference>
<dbReference type="GO" id="GO:0006355">
    <property type="term" value="P:regulation of DNA-templated transcription"/>
    <property type="evidence" value="ECO:0007669"/>
    <property type="project" value="UniProtKB-UniRule"/>
</dbReference>
<dbReference type="GO" id="GO:0006417">
    <property type="term" value="P:regulation of translation"/>
    <property type="evidence" value="ECO:0007669"/>
    <property type="project" value="UniProtKB-UniRule"/>
</dbReference>
<dbReference type="CDD" id="cd13836">
    <property type="entry name" value="IHF_B"/>
    <property type="match status" value="1"/>
</dbReference>
<dbReference type="FunFam" id="4.10.520.10:FF:000003">
    <property type="entry name" value="Integration host factor subunit beta"/>
    <property type="match status" value="1"/>
</dbReference>
<dbReference type="Gene3D" id="4.10.520.10">
    <property type="entry name" value="IHF-like DNA-binding proteins"/>
    <property type="match status" value="1"/>
</dbReference>
<dbReference type="HAMAP" id="MF_00381">
    <property type="entry name" value="IHF_beta"/>
    <property type="match status" value="1"/>
</dbReference>
<dbReference type="InterPro" id="IPR000119">
    <property type="entry name" value="Hist_DNA-bd"/>
</dbReference>
<dbReference type="InterPro" id="IPR020816">
    <property type="entry name" value="Histone-like_DNA-bd_CS"/>
</dbReference>
<dbReference type="InterPro" id="IPR010992">
    <property type="entry name" value="IHF-like_DNA-bd_dom_sf"/>
</dbReference>
<dbReference type="InterPro" id="IPR005685">
    <property type="entry name" value="IHF_beta"/>
</dbReference>
<dbReference type="NCBIfam" id="TIGR00988">
    <property type="entry name" value="hip"/>
    <property type="match status" value="1"/>
</dbReference>
<dbReference type="NCBIfam" id="NF001222">
    <property type="entry name" value="PRK00199.1"/>
    <property type="match status" value="1"/>
</dbReference>
<dbReference type="PANTHER" id="PTHR33175">
    <property type="entry name" value="DNA-BINDING PROTEIN HU"/>
    <property type="match status" value="1"/>
</dbReference>
<dbReference type="PANTHER" id="PTHR33175:SF5">
    <property type="entry name" value="INTEGRATION HOST FACTOR SUBUNIT BETA"/>
    <property type="match status" value="1"/>
</dbReference>
<dbReference type="Pfam" id="PF00216">
    <property type="entry name" value="Bac_DNA_binding"/>
    <property type="match status" value="1"/>
</dbReference>
<dbReference type="PRINTS" id="PR01727">
    <property type="entry name" value="DNABINDINGHU"/>
</dbReference>
<dbReference type="SMART" id="SM00411">
    <property type="entry name" value="BHL"/>
    <property type="match status" value="1"/>
</dbReference>
<dbReference type="SUPFAM" id="SSF47729">
    <property type="entry name" value="IHF-like DNA-binding proteins"/>
    <property type="match status" value="1"/>
</dbReference>
<dbReference type="PROSITE" id="PS00045">
    <property type="entry name" value="HISTONE_LIKE"/>
    <property type="match status" value="1"/>
</dbReference>
<reference key="1">
    <citation type="journal article" date="2009" name="Genome Biol.">
        <title>Genomic and genetic analyses of diversity and plant interactions of Pseudomonas fluorescens.</title>
        <authorList>
            <person name="Silby M.W."/>
            <person name="Cerdeno-Tarraga A.M."/>
            <person name="Vernikos G.S."/>
            <person name="Giddens S.R."/>
            <person name="Jackson R.W."/>
            <person name="Preston G.M."/>
            <person name="Zhang X.-X."/>
            <person name="Moon C.D."/>
            <person name="Gehrig S.M."/>
            <person name="Godfrey S.A.C."/>
            <person name="Knight C.G."/>
            <person name="Malone J.G."/>
            <person name="Robinson Z."/>
            <person name="Spiers A.J."/>
            <person name="Harris S."/>
            <person name="Challis G.L."/>
            <person name="Yaxley A.M."/>
            <person name="Harris D."/>
            <person name="Seeger K."/>
            <person name="Murphy L."/>
            <person name="Rutter S."/>
            <person name="Squares R."/>
            <person name="Quail M.A."/>
            <person name="Saunders E."/>
            <person name="Mavromatis K."/>
            <person name="Brettin T.S."/>
            <person name="Bentley S.D."/>
            <person name="Hothersall J."/>
            <person name="Stephens E."/>
            <person name="Thomas C.M."/>
            <person name="Parkhill J."/>
            <person name="Levy S.B."/>
            <person name="Rainey P.B."/>
            <person name="Thomson N.R."/>
        </authorList>
    </citation>
    <scope>NUCLEOTIDE SEQUENCE [LARGE SCALE GENOMIC DNA]</scope>
    <source>
        <strain>Pf0-1</strain>
    </source>
</reference>
<organism>
    <name type="scientific">Pseudomonas fluorescens (strain Pf0-1)</name>
    <dbReference type="NCBI Taxonomy" id="205922"/>
    <lineage>
        <taxon>Bacteria</taxon>
        <taxon>Pseudomonadati</taxon>
        <taxon>Pseudomonadota</taxon>
        <taxon>Gammaproteobacteria</taxon>
        <taxon>Pseudomonadales</taxon>
        <taxon>Pseudomonadaceae</taxon>
        <taxon>Pseudomonas</taxon>
    </lineage>
</organism>
<proteinExistence type="inferred from homology"/>
<sequence>MTKSELIERIVTHQGLLSSKDVELAIKTMLEQMSQCLATGDRIEIRGFGSFSLHYRAPRVGRNPKTGQSVSLDGKFVPHFKPGKELRDRVNEEEEGEL</sequence>
<comment type="function">
    <text evidence="1">This protein is one of the two subunits of integration host factor, a specific DNA-binding protein that functions in genetic recombination as well as in transcriptional and translational control.</text>
</comment>
<comment type="subunit">
    <text evidence="1">Heterodimer of an alpha and a beta chain.</text>
</comment>
<comment type="similarity">
    <text evidence="1">Belongs to the bacterial histone-like protein family.</text>
</comment>
<protein>
    <recommendedName>
        <fullName evidence="1">Integration host factor subunit beta</fullName>
        <shortName evidence="1">IHF-beta</shortName>
    </recommendedName>
</protein>
<feature type="chain" id="PRO_1000060636" description="Integration host factor subunit beta">
    <location>
        <begin position="1"/>
        <end position="98"/>
    </location>
</feature>
<accession>Q3K8V7</accession>